<sequence length="175" mass="19587">MNLKDYIRSIPDYPKKGILFRDITTLIKDADAFEECINQIIERSKNYKIDKIAAIESRGFVFASAVSYLLKKPFIMFRKKNKLPAETHSVDFELEYGTATIEVHKDSIDKDDSVLIIDDLIATGGTAEAAAKLVEMSNAKIAAFVFAINLFDLGGSDNLVKKGYKVENLMDFPGH</sequence>
<comment type="function">
    <text evidence="1">Catalyzes a salvage reaction resulting in the formation of AMP, that is energically less costly than de novo synthesis.</text>
</comment>
<comment type="catalytic activity">
    <reaction evidence="1">
        <text>AMP + diphosphate = 5-phospho-alpha-D-ribose 1-diphosphate + adenine</text>
        <dbReference type="Rhea" id="RHEA:16609"/>
        <dbReference type="ChEBI" id="CHEBI:16708"/>
        <dbReference type="ChEBI" id="CHEBI:33019"/>
        <dbReference type="ChEBI" id="CHEBI:58017"/>
        <dbReference type="ChEBI" id="CHEBI:456215"/>
        <dbReference type="EC" id="2.4.2.7"/>
    </reaction>
</comment>
<comment type="pathway">
    <text evidence="1">Purine metabolism; AMP biosynthesis via salvage pathway; AMP from adenine: step 1/1.</text>
</comment>
<comment type="subunit">
    <text evidence="1">Homodimer.</text>
</comment>
<comment type="subcellular location">
    <subcellularLocation>
        <location evidence="1">Cytoplasm</location>
    </subcellularLocation>
</comment>
<comment type="similarity">
    <text evidence="1">Belongs to the purine/pyrimidine phosphoribosyltransferase family.</text>
</comment>
<organism>
    <name type="scientific">Pelagibacter ubique (strain HTCC1062)</name>
    <dbReference type="NCBI Taxonomy" id="335992"/>
    <lineage>
        <taxon>Bacteria</taxon>
        <taxon>Pseudomonadati</taxon>
        <taxon>Pseudomonadota</taxon>
        <taxon>Alphaproteobacteria</taxon>
        <taxon>Candidatus Pelagibacterales</taxon>
        <taxon>Candidatus Pelagibacteraceae</taxon>
        <taxon>Candidatus Pelagibacter</taxon>
    </lineage>
</organism>
<accession>Q4FLB9</accession>
<name>APT_PELUB</name>
<dbReference type="EC" id="2.4.2.7" evidence="1"/>
<dbReference type="EMBL" id="CP000084">
    <property type="protein sequence ID" value="AAZ22019.1"/>
    <property type="molecule type" value="Genomic_DNA"/>
</dbReference>
<dbReference type="RefSeq" id="WP_006996677.1">
    <property type="nucleotide sequence ID" value="NC_007205.1"/>
</dbReference>
<dbReference type="SMR" id="Q4FLB9"/>
<dbReference type="STRING" id="335992.SAR11_1213"/>
<dbReference type="GeneID" id="66295708"/>
<dbReference type="KEGG" id="pub:SAR11_1213"/>
<dbReference type="eggNOG" id="COG0503">
    <property type="taxonomic scope" value="Bacteria"/>
</dbReference>
<dbReference type="HOGENOM" id="CLU_063339_3_0_5"/>
<dbReference type="OrthoDB" id="9803963at2"/>
<dbReference type="UniPathway" id="UPA00588">
    <property type="reaction ID" value="UER00646"/>
</dbReference>
<dbReference type="Proteomes" id="UP000002528">
    <property type="component" value="Chromosome"/>
</dbReference>
<dbReference type="GO" id="GO:0005737">
    <property type="term" value="C:cytoplasm"/>
    <property type="evidence" value="ECO:0007669"/>
    <property type="project" value="UniProtKB-SubCell"/>
</dbReference>
<dbReference type="GO" id="GO:0002055">
    <property type="term" value="F:adenine binding"/>
    <property type="evidence" value="ECO:0007669"/>
    <property type="project" value="TreeGrafter"/>
</dbReference>
<dbReference type="GO" id="GO:0003999">
    <property type="term" value="F:adenine phosphoribosyltransferase activity"/>
    <property type="evidence" value="ECO:0007669"/>
    <property type="project" value="UniProtKB-UniRule"/>
</dbReference>
<dbReference type="GO" id="GO:0016208">
    <property type="term" value="F:AMP binding"/>
    <property type="evidence" value="ECO:0007669"/>
    <property type="project" value="TreeGrafter"/>
</dbReference>
<dbReference type="GO" id="GO:0006168">
    <property type="term" value="P:adenine salvage"/>
    <property type="evidence" value="ECO:0007669"/>
    <property type="project" value="InterPro"/>
</dbReference>
<dbReference type="GO" id="GO:0044209">
    <property type="term" value="P:AMP salvage"/>
    <property type="evidence" value="ECO:0007669"/>
    <property type="project" value="UniProtKB-UniRule"/>
</dbReference>
<dbReference type="GO" id="GO:0006166">
    <property type="term" value="P:purine ribonucleoside salvage"/>
    <property type="evidence" value="ECO:0007669"/>
    <property type="project" value="UniProtKB-KW"/>
</dbReference>
<dbReference type="CDD" id="cd06223">
    <property type="entry name" value="PRTases_typeI"/>
    <property type="match status" value="1"/>
</dbReference>
<dbReference type="FunFam" id="3.40.50.2020:FF:000021">
    <property type="entry name" value="Adenine phosphoribosyltransferase"/>
    <property type="match status" value="1"/>
</dbReference>
<dbReference type="Gene3D" id="3.40.50.2020">
    <property type="match status" value="1"/>
</dbReference>
<dbReference type="HAMAP" id="MF_00004">
    <property type="entry name" value="Aden_phosphoribosyltr"/>
    <property type="match status" value="1"/>
</dbReference>
<dbReference type="InterPro" id="IPR005764">
    <property type="entry name" value="Ade_phspho_trans"/>
</dbReference>
<dbReference type="InterPro" id="IPR000836">
    <property type="entry name" value="PRibTrfase_dom"/>
</dbReference>
<dbReference type="InterPro" id="IPR029057">
    <property type="entry name" value="PRTase-like"/>
</dbReference>
<dbReference type="InterPro" id="IPR050054">
    <property type="entry name" value="UPRTase/APRTase"/>
</dbReference>
<dbReference type="NCBIfam" id="TIGR01090">
    <property type="entry name" value="apt"/>
    <property type="match status" value="1"/>
</dbReference>
<dbReference type="NCBIfam" id="NF002634">
    <property type="entry name" value="PRK02304.1-3"/>
    <property type="match status" value="1"/>
</dbReference>
<dbReference type="NCBIfam" id="NF002636">
    <property type="entry name" value="PRK02304.1-5"/>
    <property type="match status" value="1"/>
</dbReference>
<dbReference type="PANTHER" id="PTHR32315">
    <property type="entry name" value="ADENINE PHOSPHORIBOSYLTRANSFERASE"/>
    <property type="match status" value="1"/>
</dbReference>
<dbReference type="PANTHER" id="PTHR32315:SF3">
    <property type="entry name" value="ADENINE PHOSPHORIBOSYLTRANSFERASE"/>
    <property type="match status" value="1"/>
</dbReference>
<dbReference type="Pfam" id="PF00156">
    <property type="entry name" value="Pribosyltran"/>
    <property type="match status" value="1"/>
</dbReference>
<dbReference type="SUPFAM" id="SSF53271">
    <property type="entry name" value="PRTase-like"/>
    <property type="match status" value="1"/>
</dbReference>
<dbReference type="PROSITE" id="PS00103">
    <property type="entry name" value="PUR_PYR_PR_TRANSFER"/>
    <property type="match status" value="1"/>
</dbReference>
<reference key="1">
    <citation type="journal article" date="2005" name="Science">
        <title>Genome streamlining in a cosmopolitan oceanic bacterium.</title>
        <authorList>
            <person name="Giovannoni S.J."/>
            <person name="Tripp H.J."/>
            <person name="Givan S."/>
            <person name="Podar M."/>
            <person name="Vergin K.L."/>
            <person name="Baptista D."/>
            <person name="Bibbs L."/>
            <person name="Eads J."/>
            <person name="Richardson T.H."/>
            <person name="Noordewier M."/>
            <person name="Rappe M.S."/>
            <person name="Short J.M."/>
            <person name="Carrington J.C."/>
            <person name="Mathur E.J."/>
        </authorList>
    </citation>
    <scope>NUCLEOTIDE SEQUENCE [LARGE SCALE GENOMIC DNA]</scope>
    <source>
        <strain>HTCC1062</strain>
    </source>
</reference>
<proteinExistence type="inferred from homology"/>
<protein>
    <recommendedName>
        <fullName evidence="1">Adenine phosphoribosyltransferase</fullName>
        <shortName evidence="1">APRT</shortName>
        <ecNumber evidence="1">2.4.2.7</ecNumber>
    </recommendedName>
</protein>
<keyword id="KW-0963">Cytoplasm</keyword>
<keyword id="KW-0328">Glycosyltransferase</keyword>
<keyword id="KW-0660">Purine salvage</keyword>
<keyword id="KW-1185">Reference proteome</keyword>
<keyword id="KW-0808">Transferase</keyword>
<feature type="chain" id="PRO_0000321381" description="Adenine phosphoribosyltransferase">
    <location>
        <begin position="1"/>
        <end position="175"/>
    </location>
</feature>
<evidence type="ECO:0000255" key="1">
    <source>
        <dbReference type="HAMAP-Rule" id="MF_00004"/>
    </source>
</evidence>
<gene>
    <name evidence="1" type="primary">apt</name>
    <name type="ordered locus">SAR11_1213</name>
</gene>